<comment type="subcellular location">
    <subcellularLocation>
        <location evidence="1">Nucleus</location>
    </subcellularLocation>
</comment>
<comment type="sequence caution" evidence="3">
    <conflict type="erroneous gene model prediction">
        <sequence resource="EMBL-CDS" id="AAO34502"/>
    </conflict>
    <text>The predicted gene has been split into 2 genes: Os03g0622100 and Os03g0622200.</text>
</comment>
<feature type="chain" id="PRO_0000378051" description="B3 domain-containing protein Os03g0622100">
    <location>
        <begin position="1"/>
        <end position="382"/>
    </location>
</feature>
<feature type="DNA-binding region" description="TF-B3 1" evidence="1">
    <location>
        <begin position="29"/>
        <end position="123"/>
    </location>
</feature>
<feature type="DNA-binding region" description="TF-B3 2" evidence="1">
    <location>
        <begin position="261"/>
        <end position="363"/>
    </location>
</feature>
<feature type="region of interest" description="Disordered" evidence="2">
    <location>
        <begin position="136"/>
        <end position="222"/>
    </location>
</feature>
<feature type="compositionally biased region" description="Basic and acidic residues" evidence="2">
    <location>
        <begin position="136"/>
        <end position="158"/>
    </location>
</feature>
<feature type="compositionally biased region" description="Basic and acidic residues" evidence="2">
    <location>
        <begin position="193"/>
        <end position="202"/>
    </location>
</feature>
<feature type="compositionally biased region" description="Acidic residues" evidence="2">
    <location>
        <begin position="203"/>
        <end position="218"/>
    </location>
</feature>
<dbReference type="EMBL" id="AC097280">
    <property type="protein sequence ID" value="AAO34502.1"/>
    <property type="status" value="ALT_SEQ"/>
    <property type="molecule type" value="Genomic_DNA"/>
</dbReference>
<dbReference type="EMBL" id="DP000009">
    <property type="protein sequence ID" value="ABF97677.1"/>
    <property type="molecule type" value="Genomic_DNA"/>
</dbReference>
<dbReference type="EMBL" id="AP008209">
    <property type="protein sequence ID" value="BAF12595.1"/>
    <property type="molecule type" value="Genomic_DNA"/>
</dbReference>
<dbReference type="EMBL" id="AP014959">
    <property type="protein sequence ID" value="BAS85314.1"/>
    <property type="molecule type" value="Genomic_DNA"/>
</dbReference>
<dbReference type="EMBL" id="AK063506">
    <property type="protein sequence ID" value="BAG88742.1"/>
    <property type="molecule type" value="mRNA"/>
</dbReference>
<dbReference type="RefSeq" id="XP_015630283.1">
    <property type="nucleotide sequence ID" value="XM_015774797.1"/>
</dbReference>
<dbReference type="SMR" id="Q10GM4"/>
<dbReference type="FunCoup" id="Q10GM4">
    <property type="interactions" value="1"/>
</dbReference>
<dbReference type="STRING" id="39947.Q10GM4"/>
<dbReference type="PaxDb" id="39947-Q10GM4"/>
<dbReference type="EnsemblPlants" id="Os03t0622100-01">
    <property type="protein sequence ID" value="Os03t0622100-01"/>
    <property type="gene ID" value="Os03g0622100"/>
</dbReference>
<dbReference type="Gramene" id="Os03t0622100-01">
    <property type="protein sequence ID" value="Os03t0622100-01"/>
    <property type="gene ID" value="Os03g0622100"/>
</dbReference>
<dbReference type="KEGG" id="dosa:Os03g0622100"/>
<dbReference type="eggNOG" id="ENOG502QT0X">
    <property type="taxonomic scope" value="Eukaryota"/>
</dbReference>
<dbReference type="HOGENOM" id="CLU_015069_0_1_1"/>
<dbReference type="InParanoid" id="Q10GM4"/>
<dbReference type="OMA" id="SAYMHER"/>
<dbReference type="OrthoDB" id="596845at2759"/>
<dbReference type="PlantReactome" id="R-OSA-9826782">
    <property type="pathway name" value="Regulation of seed germination and coleoptile growth under submergence and normal gravity environment"/>
</dbReference>
<dbReference type="Proteomes" id="UP000000763">
    <property type="component" value="Chromosome 3"/>
</dbReference>
<dbReference type="Proteomes" id="UP000059680">
    <property type="component" value="Chromosome 3"/>
</dbReference>
<dbReference type="GO" id="GO:0005634">
    <property type="term" value="C:nucleus"/>
    <property type="evidence" value="ECO:0007669"/>
    <property type="project" value="UniProtKB-SubCell"/>
</dbReference>
<dbReference type="GO" id="GO:0003677">
    <property type="term" value="F:DNA binding"/>
    <property type="evidence" value="ECO:0007669"/>
    <property type="project" value="UniProtKB-KW"/>
</dbReference>
<dbReference type="CDD" id="cd10017">
    <property type="entry name" value="B3_DNA"/>
    <property type="match status" value="2"/>
</dbReference>
<dbReference type="Gene3D" id="2.40.330.10">
    <property type="entry name" value="DNA-binding pseudobarrel domain"/>
    <property type="match status" value="2"/>
</dbReference>
<dbReference type="InterPro" id="IPR003340">
    <property type="entry name" value="B3_DNA-bd"/>
</dbReference>
<dbReference type="InterPro" id="IPR015300">
    <property type="entry name" value="DNA-bd_pseudobarrel_sf"/>
</dbReference>
<dbReference type="InterPro" id="IPR044837">
    <property type="entry name" value="REM16-like"/>
</dbReference>
<dbReference type="PANTHER" id="PTHR31391:SF70">
    <property type="entry name" value="B3 DOMAIN-CONTAINING PROTEIN OS03G0622200"/>
    <property type="match status" value="1"/>
</dbReference>
<dbReference type="PANTHER" id="PTHR31391">
    <property type="entry name" value="B3 DOMAIN-CONTAINING PROTEIN OS11G0197600-RELATED"/>
    <property type="match status" value="1"/>
</dbReference>
<dbReference type="Pfam" id="PF02362">
    <property type="entry name" value="B3"/>
    <property type="match status" value="2"/>
</dbReference>
<dbReference type="SMART" id="SM01019">
    <property type="entry name" value="B3"/>
    <property type="match status" value="2"/>
</dbReference>
<dbReference type="SUPFAM" id="SSF101936">
    <property type="entry name" value="DNA-binding pseudobarrel domain"/>
    <property type="match status" value="2"/>
</dbReference>
<dbReference type="PROSITE" id="PS50863">
    <property type="entry name" value="B3"/>
    <property type="match status" value="2"/>
</dbReference>
<sequence>MGMLKIGKNCSVCKEWQEHCYWSHMADDCKHFLTYMVGDFTESMIVPSRFANNFNGHISEVVNLKSPSGKTWSIGVAYSDTGELVLRSGWKEFVDANGVQENDCLLFRYSGVSSFDVLIFDPSGCEKASPHFVENRGFGREEKSAGAEGGGRDGDKNGHHQHQLEMTPHKNSSRCRSIPSACKRGLFSDEIEQDHREEKKEGDDEDEDEDEDEDVDKDGEDRYYFCRHGGRVTEYNLSKGDKEEISRVPVPVEPGNPVLVKVIHASHLLSSRYSTVGVSPEFAGRYLGPAMAREVVMERGGGGGGGDQWHVRFVRRESSRGFHGTGWRRFARDNGLLAHDVCLFELRLVDGAGAGDRLRRRPRPTMAVHVLRRVRGRFVLIR</sequence>
<name>Y3221_ORYSJ</name>
<accession>Q10GM4</accession>
<accession>A0A0P0W095</accession>
<accession>Q851V0</accession>
<reference key="1">
    <citation type="journal article" date="2005" name="Genome Res.">
        <title>Sequence, annotation, and analysis of synteny between rice chromosome 3 and diverged grass species.</title>
        <authorList>
            <consortium name="The rice chromosome 3 sequencing consortium"/>
            <person name="Buell C.R."/>
            <person name="Yuan Q."/>
            <person name="Ouyang S."/>
            <person name="Liu J."/>
            <person name="Zhu W."/>
            <person name="Wang A."/>
            <person name="Maiti R."/>
            <person name="Haas B."/>
            <person name="Wortman J."/>
            <person name="Pertea M."/>
            <person name="Jones K.M."/>
            <person name="Kim M."/>
            <person name="Overton L."/>
            <person name="Tsitrin T."/>
            <person name="Fadrosh D."/>
            <person name="Bera J."/>
            <person name="Weaver B."/>
            <person name="Jin S."/>
            <person name="Johri S."/>
            <person name="Reardon M."/>
            <person name="Webb K."/>
            <person name="Hill J."/>
            <person name="Moffat K."/>
            <person name="Tallon L."/>
            <person name="Van Aken S."/>
            <person name="Lewis M."/>
            <person name="Utterback T."/>
            <person name="Feldblyum T."/>
            <person name="Zismann V."/>
            <person name="Iobst S."/>
            <person name="Hsiao J."/>
            <person name="de Vazeille A.R."/>
            <person name="Salzberg S.L."/>
            <person name="White O."/>
            <person name="Fraser C.M."/>
            <person name="Yu Y."/>
            <person name="Kim H."/>
            <person name="Rambo T."/>
            <person name="Currie J."/>
            <person name="Collura K."/>
            <person name="Kernodle-Thompson S."/>
            <person name="Wei F."/>
            <person name="Kudrna K."/>
            <person name="Ammiraju J.S.S."/>
            <person name="Luo M."/>
            <person name="Goicoechea J.L."/>
            <person name="Wing R.A."/>
            <person name="Henry D."/>
            <person name="Oates R."/>
            <person name="Palmer M."/>
            <person name="Pries G."/>
            <person name="Saski C."/>
            <person name="Simmons J."/>
            <person name="Soderlund C."/>
            <person name="Nelson W."/>
            <person name="de la Bastide M."/>
            <person name="Spiegel L."/>
            <person name="Nascimento L."/>
            <person name="Huang E."/>
            <person name="Preston R."/>
            <person name="Zutavern T."/>
            <person name="Palmer L."/>
            <person name="O'Shaughnessy A."/>
            <person name="Dike S."/>
            <person name="McCombie W.R."/>
            <person name="Minx P."/>
            <person name="Cordum H."/>
            <person name="Wilson R."/>
            <person name="Jin W."/>
            <person name="Lee H.R."/>
            <person name="Jiang J."/>
            <person name="Jackson S."/>
        </authorList>
    </citation>
    <scope>NUCLEOTIDE SEQUENCE [LARGE SCALE GENOMIC DNA]</scope>
    <source>
        <strain>cv. Nipponbare</strain>
    </source>
</reference>
<reference key="2">
    <citation type="journal article" date="2005" name="Nature">
        <title>The map-based sequence of the rice genome.</title>
        <authorList>
            <consortium name="International rice genome sequencing project (IRGSP)"/>
        </authorList>
    </citation>
    <scope>NUCLEOTIDE SEQUENCE [LARGE SCALE GENOMIC DNA]</scope>
    <source>
        <strain>cv. Nipponbare</strain>
    </source>
</reference>
<reference key="3">
    <citation type="journal article" date="2008" name="Nucleic Acids Res.">
        <title>The rice annotation project database (RAP-DB): 2008 update.</title>
        <authorList>
            <consortium name="The rice annotation project (RAP)"/>
        </authorList>
    </citation>
    <scope>GENOME REANNOTATION</scope>
    <source>
        <strain>cv. Nipponbare</strain>
    </source>
</reference>
<reference key="4">
    <citation type="journal article" date="2013" name="Rice">
        <title>Improvement of the Oryza sativa Nipponbare reference genome using next generation sequence and optical map data.</title>
        <authorList>
            <person name="Kawahara Y."/>
            <person name="de la Bastide M."/>
            <person name="Hamilton J.P."/>
            <person name="Kanamori H."/>
            <person name="McCombie W.R."/>
            <person name="Ouyang S."/>
            <person name="Schwartz D.C."/>
            <person name="Tanaka T."/>
            <person name="Wu J."/>
            <person name="Zhou S."/>
            <person name="Childs K.L."/>
            <person name="Davidson R.M."/>
            <person name="Lin H."/>
            <person name="Quesada-Ocampo L."/>
            <person name="Vaillancourt B."/>
            <person name="Sakai H."/>
            <person name="Lee S.S."/>
            <person name="Kim J."/>
            <person name="Numa H."/>
            <person name="Itoh T."/>
            <person name="Buell C.R."/>
            <person name="Matsumoto T."/>
        </authorList>
    </citation>
    <scope>GENOME REANNOTATION</scope>
    <source>
        <strain>cv. Nipponbare</strain>
    </source>
</reference>
<reference key="5">
    <citation type="journal article" date="2003" name="Science">
        <title>Collection, mapping, and annotation of over 28,000 cDNA clones from japonica rice.</title>
        <authorList>
            <consortium name="The rice full-length cDNA consortium"/>
        </authorList>
    </citation>
    <scope>NUCLEOTIDE SEQUENCE [LARGE SCALE MRNA]</scope>
    <source>
        <strain>cv. Nipponbare</strain>
    </source>
</reference>
<evidence type="ECO:0000255" key="1">
    <source>
        <dbReference type="PROSITE-ProRule" id="PRU00326"/>
    </source>
</evidence>
<evidence type="ECO:0000256" key="2">
    <source>
        <dbReference type="SAM" id="MobiDB-lite"/>
    </source>
</evidence>
<evidence type="ECO:0000305" key="3"/>
<protein>
    <recommendedName>
        <fullName>B3 domain-containing protein Os03g0622100</fullName>
    </recommendedName>
</protein>
<keyword id="KW-0238">DNA-binding</keyword>
<keyword id="KW-0539">Nucleus</keyword>
<keyword id="KW-1185">Reference proteome</keyword>
<keyword id="KW-0677">Repeat</keyword>
<keyword id="KW-0804">Transcription</keyword>
<keyword id="KW-0805">Transcription regulation</keyword>
<proteinExistence type="evidence at transcript level"/>
<gene>
    <name type="ordered locus">Os03g0622100</name>
    <name type="ordered locus">LOC_Os03g42420</name>
    <name type="ORF">OSJNBb0111B07.22</name>
</gene>
<organism>
    <name type="scientific">Oryza sativa subsp. japonica</name>
    <name type="common">Rice</name>
    <dbReference type="NCBI Taxonomy" id="39947"/>
    <lineage>
        <taxon>Eukaryota</taxon>
        <taxon>Viridiplantae</taxon>
        <taxon>Streptophyta</taxon>
        <taxon>Embryophyta</taxon>
        <taxon>Tracheophyta</taxon>
        <taxon>Spermatophyta</taxon>
        <taxon>Magnoliopsida</taxon>
        <taxon>Liliopsida</taxon>
        <taxon>Poales</taxon>
        <taxon>Poaceae</taxon>
        <taxon>BOP clade</taxon>
        <taxon>Oryzoideae</taxon>
        <taxon>Oryzeae</taxon>
        <taxon>Oryzinae</taxon>
        <taxon>Oryza</taxon>
        <taxon>Oryza sativa</taxon>
    </lineage>
</organism>